<protein>
    <recommendedName>
        <fullName evidence="1">Glutamyl-tRNA reductase</fullName>
        <shortName evidence="1">GluTR</shortName>
        <ecNumber evidence="1">1.2.1.70</ecNumber>
    </recommendedName>
</protein>
<reference key="1">
    <citation type="submission" date="2002-12" db="EMBL/GenBank/DDBJ databases">
        <title>Complete genome sequence of Vibrio vulnificus CMCP6.</title>
        <authorList>
            <person name="Rhee J.H."/>
            <person name="Kim S.Y."/>
            <person name="Chung S.S."/>
            <person name="Kim J.J."/>
            <person name="Moon Y.H."/>
            <person name="Jeong H."/>
            <person name="Choy H.E."/>
        </authorList>
    </citation>
    <scope>NUCLEOTIDE SEQUENCE [LARGE SCALE GENOMIC DNA]</scope>
    <source>
        <strain>CMCP6</strain>
    </source>
</reference>
<accession>Q8DFF8</accession>
<proteinExistence type="inferred from homology"/>
<dbReference type="EC" id="1.2.1.70" evidence="1"/>
<dbReference type="EMBL" id="AE016795">
    <property type="protein sequence ID" value="AAO08790.1"/>
    <property type="molecule type" value="Genomic_DNA"/>
</dbReference>
<dbReference type="RefSeq" id="WP_011078368.1">
    <property type="nucleotide sequence ID" value="NC_004459.3"/>
</dbReference>
<dbReference type="SMR" id="Q8DFF8"/>
<dbReference type="KEGG" id="vvu:VV1_0254"/>
<dbReference type="HOGENOM" id="CLU_035113_2_2_6"/>
<dbReference type="UniPathway" id="UPA00251">
    <property type="reaction ID" value="UER00316"/>
</dbReference>
<dbReference type="Proteomes" id="UP000002275">
    <property type="component" value="Chromosome 1"/>
</dbReference>
<dbReference type="GO" id="GO:0008883">
    <property type="term" value="F:glutamyl-tRNA reductase activity"/>
    <property type="evidence" value="ECO:0007669"/>
    <property type="project" value="UniProtKB-UniRule"/>
</dbReference>
<dbReference type="GO" id="GO:0050661">
    <property type="term" value="F:NADP binding"/>
    <property type="evidence" value="ECO:0007669"/>
    <property type="project" value="InterPro"/>
</dbReference>
<dbReference type="GO" id="GO:0019353">
    <property type="term" value="P:protoporphyrinogen IX biosynthetic process from glutamate"/>
    <property type="evidence" value="ECO:0007669"/>
    <property type="project" value="TreeGrafter"/>
</dbReference>
<dbReference type="CDD" id="cd05213">
    <property type="entry name" value="NAD_bind_Glutamyl_tRNA_reduct"/>
    <property type="match status" value="1"/>
</dbReference>
<dbReference type="FunFam" id="3.30.460.30:FF:000001">
    <property type="entry name" value="Glutamyl-tRNA reductase"/>
    <property type="match status" value="1"/>
</dbReference>
<dbReference type="FunFam" id="3.40.50.720:FF:000031">
    <property type="entry name" value="Glutamyl-tRNA reductase"/>
    <property type="match status" value="1"/>
</dbReference>
<dbReference type="Gene3D" id="3.30.460.30">
    <property type="entry name" value="Glutamyl-tRNA reductase, N-terminal domain"/>
    <property type="match status" value="1"/>
</dbReference>
<dbReference type="Gene3D" id="3.40.50.720">
    <property type="entry name" value="NAD(P)-binding Rossmann-like Domain"/>
    <property type="match status" value="1"/>
</dbReference>
<dbReference type="HAMAP" id="MF_00087">
    <property type="entry name" value="Glu_tRNA_reductase"/>
    <property type="match status" value="1"/>
</dbReference>
<dbReference type="InterPro" id="IPR000343">
    <property type="entry name" value="4pyrrol_synth_GluRdtase"/>
</dbReference>
<dbReference type="InterPro" id="IPR015896">
    <property type="entry name" value="4pyrrol_synth_GluRdtase_dimer"/>
</dbReference>
<dbReference type="InterPro" id="IPR015895">
    <property type="entry name" value="4pyrrol_synth_GluRdtase_N"/>
</dbReference>
<dbReference type="InterPro" id="IPR018214">
    <property type="entry name" value="GluRdtase_CS"/>
</dbReference>
<dbReference type="InterPro" id="IPR036453">
    <property type="entry name" value="GluRdtase_dimer_dom_sf"/>
</dbReference>
<dbReference type="InterPro" id="IPR036343">
    <property type="entry name" value="GluRdtase_N_sf"/>
</dbReference>
<dbReference type="InterPro" id="IPR036291">
    <property type="entry name" value="NAD(P)-bd_dom_sf"/>
</dbReference>
<dbReference type="InterPro" id="IPR006151">
    <property type="entry name" value="Shikm_DH/Glu-tRNA_Rdtase"/>
</dbReference>
<dbReference type="NCBIfam" id="TIGR01035">
    <property type="entry name" value="hemA"/>
    <property type="match status" value="1"/>
</dbReference>
<dbReference type="PANTHER" id="PTHR43013">
    <property type="entry name" value="GLUTAMYL-TRNA REDUCTASE"/>
    <property type="match status" value="1"/>
</dbReference>
<dbReference type="PANTHER" id="PTHR43013:SF1">
    <property type="entry name" value="GLUTAMYL-TRNA REDUCTASE"/>
    <property type="match status" value="1"/>
</dbReference>
<dbReference type="Pfam" id="PF00745">
    <property type="entry name" value="GlutR_dimer"/>
    <property type="match status" value="1"/>
</dbReference>
<dbReference type="Pfam" id="PF05201">
    <property type="entry name" value="GlutR_N"/>
    <property type="match status" value="1"/>
</dbReference>
<dbReference type="Pfam" id="PF01488">
    <property type="entry name" value="Shikimate_DH"/>
    <property type="match status" value="1"/>
</dbReference>
<dbReference type="PIRSF" id="PIRSF000445">
    <property type="entry name" value="4pyrrol_synth_GluRdtase"/>
    <property type="match status" value="1"/>
</dbReference>
<dbReference type="SUPFAM" id="SSF69742">
    <property type="entry name" value="Glutamyl tRNA-reductase catalytic, N-terminal domain"/>
    <property type="match status" value="1"/>
</dbReference>
<dbReference type="SUPFAM" id="SSF69075">
    <property type="entry name" value="Glutamyl tRNA-reductase dimerization domain"/>
    <property type="match status" value="1"/>
</dbReference>
<dbReference type="SUPFAM" id="SSF51735">
    <property type="entry name" value="NAD(P)-binding Rossmann-fold domains"/>
    <property type="match status" value="1"/>
</dbReference>
<dbReference type="PROSITE" id="PS00747">
    <property type="entry name" value="GLUTR"/>
    <property type="match status" value="1"/>
</dbReference>
<evidence type="ECO:0000255" key="1">
    <source>
        <dbReference type="HAMAP-Rule" id="MF_00087"/>
    </source>
</evidence>
<comment type="function">
    <text evidence="1">Catalyzes the NADPH-dependent reduction of glutamyl-tRNA(Glu) to glutamate 1-semialdehyde (GSA).</text>
</comment>
<comment type="catalytic activity">
    <reaction evidence="1">
        <text>(S)-4-amino-5-oxopentanoate + tRNA(Glu) + NADP(+) = L-glutamyl-tRNA(Glu) + NADPH + H(+)</text>
        <dbReference type="Rhea" id="RHEA:12344"/>
        <dbReference type="Rhea" id="RHEA-COMP:9663"/>
        <dbReference type="Rhea" id="RHEA-COMP:9680"/>
        <dbReference type="ChEBI" id="CHEBI:15378"/>
        <dbReference type="ChEBI" id="CHEBI:57501"/>
        <dbReference type="ChEBI" id="CHEBI:57783"/>
        <dbReference type="ChEBI" id="CHEBI:58349"/>
        <dbReference type="ChEBI" id="CHEBI:78442"/>
        <dbReference type="ChEBI" id="CHEBI:78520"/>
        <dbReference type="EC" id="1.2.1.70"/>
    </reaction>
</comment>
<comment type="pathway">
    <text evidence="1">Porphyrin-containing compound metabolism; protoporphyrin-IX biosynthesis; 5-aminolevulinate from L-glutamyl-tRNA(Glu): step 1/2.</text>
</comment>
<comment type="subunit">
    <text evidence="1">Homodimer.</text>
</comment>
<comment type="domain">
    <text evidence="1">Possesses an unusual extended V-shaped dimeric structure with each monomer consisting of three distinct domains arranged along a curved 'spinal' alpha-helix. The N-terminal catalytic domain specifically recognizes the glutamate moiety of the substrate. The second domain is the NADPH-binding domain, and the third C-terminal domain is responsible for dimerization.</text>
</comment>
<comment type="miscellaneous">
    <text evidence="1">During catalysis, the active site Cys acts as a nucleophile attacking the alpha-carbonyl group of tRNA-bound glutamate with the formation of a thioester intermediate between enzyme and glutamate, and the concomitant release of tRNA(Glu). The thioester intermediate is finally reduced by direct hydride transfer from NADPH, to form the product GSA.</text>
</comment>
<comment type="similarity">
    <text evidence="1">Belongs to the glutamyl-tRNA reductase family.</text>
</comment>
<organism>
    <name type="scientific">Vibrio vulnificus (strain CMCP6)</name>
    <dbReference type="NCBI Taxonomy" id="216895"/>
    <lineage>
        <taxon>Bacteria</taxon>
        <taxon>Pseudomonadati</taxon>
        <taxon>Pseudomonadota</taxon>
        <taxon>Gammaproteobacteria</taxon>
        <taxon>Vibrionales</taxon>
        <taxon>Vibrionaceae</taxon>
        <taxon>Vibrio</taxon>
    </lineage>
</organism>
<gene>
    <name evidence="1" type="primary">hemA</name>
    <name type="ordered locus">VV1_0254</name>
</gene>
<keyword id="KW-0521">NADP</keyword>
<keyword id="KW-0560">Oxidoreductase</keyword>
<keyword id="KW-0627">Porphyrin biosynthesis</keyword>
<sequence length="419" mass="46058">MSLLAIGINHHTASVDLREKVAFGPDKLANALQQLSQHEAVNGSVILSTCNRTEVYCDVKSGARSKVIDWLSQFHQIGLEELKPSLYVYEEQAAIRHLMRVSCGLDSLVLGEPQILGQVKQAYSDSREQQAVDASLEKLFQKTFSVAKRVRTETDIGGNAVSVAYAACTLAKHIFESLEKSTVLLVGAGETIELVAKHLHANGCSKMIVANRTRERALTLAEQFDAQVISLQEIPNHLAKADIVISSTASPLPIIGKGMVETALKQRRHQPMLLVDIAVPRDVEAQVGDLNDAYLYTVDDLQSIIDSNIEQRKVEAIQAEAIVAEESAAFMSWLRSLQAVDSIREYRQSANEIREDLLSKALLSLESGSDPEKVLRELSNRLTNKLIHAPTRALQLAAEQGEPAKLTVIRQSLGLDELK</sequence>
<feature type="chain" id="PRO_0000114085" description="Glutamyl-tRNA reductase">
    <location>
        <begin position="1"/>
        <end position="419"/>
    </location>
</feature>
<feature type="active site" description="Nucleophile" evidence="1">
    <location>
        <position position="50"/>
    </location>
</feature>
<feature type="binding site" evidence="1">
    <location>
        <begin position="49"/>
        <end position="52"/>
    </location>
    <ligand>
        <name>substrate</name>
    </ligand>
</feature>
<feature type="binding site" evidence="1">
    <location>
        <position position="107"/>
    </location>
    <ligand>
        <name>substrate</name>
    </ligand>
</feature>
<feature type="binding site" evidence="1">
    <location>
        <begin position="112"/>
        <end position="114"/>
    </location>
    <ligand>
        <name>substrate</name>
    </ligand>
</feature>
<feature type="binding site" evidence="1">
    <location>
        <position position="118"/>
    </location>
    <ligand>
        <name>substrate</name>
    </ligand>
</feature>
<feature type="binding site" evidence="1">
    <location>
        <begin position="187"/>
        <end position="192"/>
    </location>
    <ligand>
        <name>NADP(+)</name>
        <dbReference type="ChEBI" id="CHEBI:58349"/>
    </ligand>
</feature>
<feature type="site" description="Important for activity" evidence="1">
    <location>
        <position position="97"/>
    </location>
</feature>
<name>HEM1_VIBVU</name>